<feature type="chain" id="PRO_0000312026" description="Uncharacterized protein At3g28850">
    <location>
        <begin position="1"/>
        <end position="428"/>
    </location>
</feature>
<feature type="domain" description="Glutaredoxin" evidence="1">
    <location>
        <begin position="241"/>
        <end position="351"/>
    </location>
</feature>
<feature type="region of interest" description="Disordered" evidence="2">
    <location>
        <begin position="386"/>
        <end position="405"/>
    </location>
</feature>
<feature type="compositionally biased region" description="Acidic residues" evidence="2">
    <location>
        <begin position="386"/>
        <end position="401"/>
    </location>
</feature>
<organism>
    <name type="scientific">Arabidopsis thaliana</name>
    <name type="common">Mouse-ear cress</name>
    <dbReference type="NCBI Taxonomy" id="3702"/>
    <lineage>
        <taxon>Eukaryota</taxon>
        <taxon>Viridiplantae</taxon>
        <taxon>Streptophyta</taxon>
        <taxon>Embryophyta</taxon>
        <taxon>Tracheophyta</taxon>
        <taxon>Spermatophyta</taxon>
        <taxon>Magnoliopsida</taxon>
        <taxon>eudicotyledons</taxon>
        <taxon>Gunneridae</taxon>
        <taxon>Pentapetalae</taxon>
        <taxon>rosids</taxon>
        <taxon>malvids</taxon>
        <taxon>Brassicales</taxon>
        <taxon>Brassicaceae</taxon>
        <taxon>Camelineae</taxon>
        <taxon>Arabidopsis</taxon>
    </lineage>
</organism>
<accession>Q9LH89</accession>
<gene>
    <name type="ordered locus">At3g28850</name>
    <name type="ORF">T19N8.15</name>
</gene>
<sequence>MGCASSKHRKRCLHCRRGYSPPVDVQRSHSVHHASQNSEDSCHMVALSSSSLGSLKLCDSSFGHNHKHLADFSEKLVSGESVKTGNGFGPNVVREKSDKEKSNLELQAKLMEAKVWSSMMNEKIPKIVPKTPIVTPPGEPETINTWEMMDGLEDVLSPLRSPNHVKSFSFDVGPNGGKSNGSVKPVWLQMEEEEEGFEDFDPEIISSFRKSLQELPSDHPFHISNHDFELKPRFNFSDEEKEEEEQSVGKERVILYFTSLRGIRKTYEESCDVRVILKSLGIRVDERDVSMHSGFKDELKELLGEKFNKGVGITLPRVFLGRKYIGGAEEIRKLNEDGKLEKLLGGCERVEENQNGNGLECEACGDVRFVPCETCSGSCKVYYEYEDDDDDDDEGDDDESVKEEREYGFQTCPDCNENGLIRCPVCCD</sequence>
<dbReference type="EMBL" id="AP002057">
    <property type="protein sequence ID" value="BAB03183.1"/>
    <property type="molecule type" value="Genomic_DNA"/>
</dbReference>
<dbReference type="EMBL" id="CP002686">
    <property type="protein sequence ID" value="AEE77496.1"/>
    <property type="molecule type" value="Genomic_DNA"/>
</dbReference>
<dbReference type="RefSeq" id="NP_189527.1">
    <property type="nucleotide sequence ID" value="NM_113806.3"/>
</dbReference>
<dbReference type="SMR" id="Q9LH89"/>
<dbReference type="FunCoup" id="Q9LH89">
    <property type="interactions" value="38"/>
</dbReference>
<dbReference type="STRING" id="3702.Q9LH89"/>
<dbReference type="iPTMnet" id="Q9LH89"/>
<dbReference type="PaxDb" id="3702-AT3G28850.1"/>
<dbReference type="ProteomicsDB" id="243105"/>
<dbReference type="EnsemblPlants" id="AT3G28850.1">
    <property type="protein sequence ID" value="AT3G28850.1"/>
    <property type="gene ID" value="AT3G28850"/>
</dbReference>
<dbReference type="GeneID" id="822517"/>
<dbReference type="Gramene" id="AT3G28850.1">
    <property type="protein sequence ID" value="AT3G28850.1"/>
    <property type="gene ID" value="AT3G28850"/>
</dbReference>
<dbReference type="KEGG" id="ath:AT3G28850"/>
<dbReference type="Araport" id="AT3G28850"/>
<dbReference type="TAIR" id="AT3G28850"/>
<dbReference type="eggNOG" id="KOG2824">
    <property type="taxonomic scope" value="Eukaryota"/>
</dbReference>
<dbReference type="HOGENOM" id="CLU_029893_0_0_1"/>
<dbReference type="InParanoid" id="Q9LH89"/>
<dbReference type="OMA" id="MHSRFKE"/>
<dbReference type="PhylomeDB" id="Q9LH89"/>
<dbReference type="PRO" id="PR:Q9LH89"/>
<dbReference type="Proteomes" id="UP000006548">
    <property type="component" value="Chromosome 3"/>
</dbReference>
<dbReference type="ExpressionAtlas" id="Q9LH89">
    <property type="expression patterns" value="baseline and differential"/>
</dbReference>
<dbReference type="GO" id="GO:0005886">
    <property type="term" value="C:plasma membrane"/>
    <property type="evidence" value="ECO:0007005"/>
    <property type="project" value="TAIR"/>
</dbReference>
<dbReference type="CDD" id="cd03031">
    <property type="entry name" value="GRX_GRX_like"/>
    <property type="match status" value="1"/>
</dbReference>
<dbReference type="FunFam" id="3.40.30.10:FF:000273">
    <property type="entry name" value="Glutaredoxin family protein"/>
    <property type="match status" value="1"/>
</dbReference>
<dbReference type="Gene3D" id="3.40.30.10">
    <property type="entry name" value="Glutaredoxin"/>
    <property type="match status" value="1"/>
</dbReference>
<dbReference type="InterPro" id="IPR002109">
    <property type="entry name" value="Glutaredoxin"/>
</dbReference>
<dbReference type="InterPro" id="IPR036249">
    <property type="entry name" value="Thioredoxin-like_sf"/>
</dbReference>
<dbReference type="PANTHER" id="PTHR45669:SF34">
    <property type="entry name" value="GENOME ASSEMBLY, CHROMOSOME: A02"/>
    <property type="match status" value="1"/>
</dbReference>
<dbReference type="PANTHER" id="PTHR45669">
    <property type="entry name" value="GLUTAREDOXIN DOMAIN-CONTAINING CYSTEINE-RICH PROTEIN CG12206-RELATED"/>
    <property type="match status" value="1"/>
</dbReference>
<dbReference type="Pfam" id="PF00462">
    <property type="entry name" value="Glutaredoxin"/>
    <property type="match status" value="1"/>
</dbReference>
<dbReference type="Pfam" id="PF23733">
    <property type="entry name" value="GRXCR1-2_C"/>
    <property type="match status" value="1"/>
</dbReference>
<dbReference type="SUPFAM" id="SSF52833">
    <property type="entry name" value="Thioredoxin-like"/>
    <property type="match status" value="1"/>
</dbReference>
<dbReference type="PROSITE" id="PS51354">
    <property type="entry name" value="GLUTAREDOXIN_2"/>
    <property type="match status" value="1"/>
</dbReference>
<proteinExistence type="predicted"/>
<evidence type="ECO:0000255" key="1">
    <source>
        <dbReference type="PROSITE-ProRule" id="PRU00686"/>
    </source>
</evidence>
<evidence type="ECO:0000256" key="2">
    <source>
        <dbReference type="SAM" id="MobiDB-lite"/>
    </source>
</evidence>
<name>Y3885_ARATH</name>
<protein>
    <recommendedName>
        <fullName>Uncharacterized protein At3g28850</fullName>
    </recommendedName>
</protein>
<reference key="1">
    <citation type="journal article" date="2000" name="DNA Res.">
        <title>Structural analysis of Arabidopsis thaliana chromosome 3. II. Sequence features of the 4,251,695 bp regions covered by 90 P1, TAC and BAC clones.</title>
        <authorList>
            <person name="Kaneko T."/>
            <person name="Katoh T."/>
            <person name="Sato S."/>
            <person name="Nakamura Y."/>
            <person name="Asamizu E."/>
            <person name="Tabata S."/>
        </authorList>
    </citation>
    <scope>NUCLEOTIDE SEQUENCE [LARGE SCALE GENOMIC DNA]</scope>
    <source>
        <strain>cv. Columbia</strain>
    </source>
</reference>
<reference key="2">
    <citation type="journal article" date="2017" name="Plant J.">
        <title>Araport11: a complete reannotation of the Arabidopsis thaliana reference genome.</title>
        <authorList>
            <person name="Cheng C.Y."/>
            <person name="Krishnakumar V."/>
            <person name="Chan A.P."/>
            <person name="Thibaud-Nissen F."/>
            <person name="Schobel S."/>
            <person name="Town C.D."/>
        </authorList>
    </citation>
    <scope>GENOME REANNOTATION</scope>
    <source>
        <strain>cv. Columbia</strain>
    </source>
</reference>
<keyword id="KW-1185">Reference proteome</keyword>